<gene>
    <name evidence="14" type="primary">Kndc1</name>
    <name type="synonym">Kiaa1768</name>
    <name type="synonym">Rasgef2</name>
    <name evidence="12" type="synonym">Vkind</name>
</gene>
<name>KNDC1_MOUSE</name>
<evidence type="ECO:0000250" key="1">
    <source>
        <dbReference type="UniProtKB" id="Q76NI1"/>
    </source>
</evidence>
<evidence type="ECO:0000255" key="2"/>
<evidence type="ECO:0000255" key="3">
    <source>
        <dbReference type="PROSITE-ProRule" id="PRU00135"/>
    </source>
</evidence>
<evidence type="ECO:0000255" key="4">
    <source>
        <dbReference type="PROSITE-ProRule" id="PRU00168"/>
    </source>
</evidence>
<evidence type="ECO:0000255" key="5">
    <source>
        <dbReference type="PROSITE-ProRule" id="PRU00709"/>
    </source>
</evidence>
<evidence type="ECO:0000256" key="6">
    <source>
        <dbReference type="SAM" id="MobiDB-lite"/>
    </source>
</evidence>
<evidence type="ECO:0000269" key="7">
    <source>
    </source>
</evidence>
<evidence type="ECO:0000269" key="8">
    <source>
    </source>
</evidence>
<evidence type="ECO:0000269" key="9">
    <source>
    </source>
</evidence>
<evidence type="ECO:0000303" key="10">
    <source>
    </source>
</evidence>
<evidence type="ECO:0000303" key="11">
    <source>
    </source>
</evidence>
<evidence type="ECO:0000303" key="12">
    <source>
    </source>
</evidence>
<evidence type="ECO:0000305" key="13"/>
<evidence type="ECO:0000312" key="14">
    <source>
        <dbReference type="MGI" id="MGI:1923734"/>
    </source>
</evidence>
<evidence type="ECO:0007744" key="15">
    <source>
    </source>
</evidence>
<keyword id="KW-0025">Alternative splicing</keyword>
<keyword id="KW-0966">Cell projection</keyword>
<keyword id="KW-0175">Coiled coil</keyword>
<keyword id="KW-0344">Guanine-nucleotide releasing factor</keyword>
<keyword id="KW-0597">Phosphoprotein</keyword>
<keyword id="KW-1185">Reference proteome</keyword>
<keyword id="KW-0677">Repeat</keyword>
<reference key="1">
    <citation type="journal article" date="2005" name="Gene Expr. Patterns">
        <title>Very-KIND is a novel nervous system specific guanine nucleotide exchange factor for Ras GTPases.</title>
        <authorList>
            <person name="Mees A."/>
            <person name="Rock R."/>
            <person name="Ciccarelli F.D."/>
            <person name="Leberfinger C.B."/>
            <person name="Borawski J.M."/>
            <person name="Bork P."/>
            <person name="Wiese S."/>
            <person name="Gessler M."/>
            <person name="Kerkhoff E."/>
        </authorList>
    </citation>
    <scope>NUCLEOTIDE SEQUENCE [MRNA] (ISOFORM 1)</scope>
    <scope>TISSUE SPECIFICITY</scope>
    <scope>DEVELOPMENTAL STAGE</scope>
    <source>
        <strain>C57BL/6J</strain>
        <tissue>Cerebellum</tissue>
    </source>
</reference>
<reference key="2">
    <citation type="journal article" date="2006" name="FASEB J.">
        <title>A gene-targeting approach for functional characterization of KIAA genes encoding extremely large proteins.</title>
        <authorList>
            <person name="Nakayama M."/>
            <person name="Iida M."/>
            <person name="Koseki H."/>
            <person name="Ohara O."/>
        </authorList>
    </citation>
    <scope>NUCLEOTIDE SEQUENCE [GENOMIC DNA / MRNA] (ISOFORM 1)</scope>
    <source>
        <strain>BALB/cCrSlc</strain>
        <tissue>Brain</tissue>
    </source>
</reference>
<reference key="3">
    <citation type="journal article" date="2005" name="Science">
        <title>The transcriptional landscape of the mammalian genome.</title>
        <authorList>
            <person name="Carninci P."/>
            <person name="Kasukawa T."/>
            <person name="Katayama S."/>
            <person name="Gough J."/>
            <person name="Frith M.C."/>
            <person name="Maeda N."/>
            <person name="Oyama R."/>
            <person name="Ravasi T."/>
            <person name="Lenhard B."/>
            <person name="Wells C."/>
            <person name="Kodzius R."/>
            <person name="Shimokawa K."/>
            <person name="Bajic V.B."/>
            <person name="Brenner S.E."/>
            <person name="Batalov S."/>
            <person name="Forrest A.R."/>
            <person name="Zavolan M."/>
            <person name="Davis M.J."/>
            <person name="Wilming L.G."/>
            <person name="Aidinis V."/>
            <person name="Allen J.E."/>
            <person name="Ambesi-Impiombato A."/>
            <person name="Apweiler R."/>
            <person name="Aturaliya R.N."/>
            <person name="Bailey T.L."/>
            <person name="Bansal M."/>
            <person name="Baxter L."/>
            <person name="Beisel K.W."/>
            <person name="Bersano T."/>
            <person name="Bono H."/>
            <person name="Chalk A.M."/>
            <person name="Chiu K.P."/>
            <person name="Choudhary V."/>
            <person name="Christoffels A."/>
            <person name="Clutterbuck D.R."/>
            <person name="Crowe M.L."/>
            <person name="Dalla E."/>
            <person name="Dalrymple B.P."/>
            <person name="de Bono B."/>
            <person name="Della Gatta G."/>
            <person name="di Bernardo D."/>
            <person name="Down T."/>
            <person name="Engstrom P."/>
            <person name="Fagiolini M."/>
            <person name="Faulkner G."/>
            <person name="Fletcher C.F."/>
            <person name="Fukushima T."/>
            <person name="Furuno M."/>
            <person name="Futaki S."/>
            <person name="Gariboldi M."/>
            <person name="Georgii-Hemming P."/>
            <person name="Gingeras T.R."/>
            <person name="Gojobori T."/>
            <person name="Green R.E."/>
            <person name="Gustincich S."/>
            <person name="Harbers M."/>
            <person name="Hayashi Y."/>
            <person name="Hensch T.K."/>
            <person name="Hirokawa N."/>
            <person name="Hill D."/>
            <person name="Huminiecki L."/>
            <person name="Iacono M."/>
            <person name="Ikeo K."/>
            <person name="Iwama A."/>
            <person name="Ishikawa T."/>
            <person name="Jakt M."/>
            <person name="Kanapin A."/>
            <person name="Katoh M."/>
            <person name="Kawasawa Y."/>
            <person name="Kelso J."/>
            <person name="Kitamura H."/>
            <person name="Kitano H."/>
            <person name="Kollias G."/>
            <person name="Krishnan S.P."/>
            <person name="Kruger A."/>
            <person name="Kummerfeld S.K."/>
            <person name="Kurochkin I.V."/>
            <person name="Lareau L.F."/>
            <person name="Lazarevic D."/>
            <person name="Lipovich L."/>
            <person name="Liu J."/>
            <person name="Liuni S."/>
            <person name="McWilliam S."/>
            <person name="Madan Babu M."/>
            <person name="Madera M."/>
            <person name="Marchionni L."/>
            <person name="Matsuda H."/>
            <person name="Matsuzawa S."/>
            <person name="Miki H."/>
            <person name="Mignone F."/>
            <person name="Miyake S."/>
            <person name="Morris K."/>
            <person name="Mottagui-Tabar S."/>
            <person name="Mulder N."/>
            <person name="Nakano N."/>
            <person name="Nakauchi H."/>
            <person name="Ng P."/>
            <person name="Nilsson R."/>
            <person name="Nishiguchi S."/>
            <person name="Nishikawa S."/>
            <person name="Nori F."/>
            <person name="Ohara O."/>
            <person name="Okazaki Y."/>
            <person name="Orlando V."/>
            <person name="Pang K.C."/>
            <person name="Pavan W.J."/>
            <person name="Pavesi G."/>
            <person name="Pesole G."/>
            <person name="Petrovsky N."/>
            <person name="Piazza S."/>
            <person name="Reed J."/>
            <person name="Reid J.F."/>
            <person name="Ring B.Z."/>
            <person name="Ringwald M."/>
            <person name="Rost B."/>
            <person name="Ruan Y."/>
            <person name="Salzberg S.L."/>
            <person name="Sandelin A."/>
            <person name="Schneider C."/>
            <person name="Schoenbach C."/>
            <person name="Sekiguchi K."/>
            <person name="Semple C.A."/>
            <person name="Seno S."/>
            <person name="Sessa L."/>
            <person name="Sheng Y."/>
            <person name="Shibata Y."/>
            <person name="Shimada H."/>
            <person name="Shimada K."/>
            <person name="Silva D."/>
            <person name="Sinclair B."/>
            <person name="Sperling S."/>
            <person name="Stupka E."/>
            <person name="Sugiura K."/>
            <person name="Sultana R."/>
            <person name="Takenaka Y."/>
            <person name="Taki K."/>
            <person name="Tammoja K."/>
            <person name="Tan S.L."/>
            <person name="Tang S."/>
            <person name="Taylor M.S."/>
            <person name="Tegner J."/>
            <person name="Teichmann S.A."/>
            <person name="Ueda H.R."/>
            <person name="van Nimwegen E."/>
            <person name="Verardo R."/>
            <person name="Wei C.L."/>
            <person name="Yagi K."/>
            <person name="Yamanishi H."/>
            <person name="Zabarovsky E."/>
            <person name="Zhu S."/>
            <person name="Zimmer A."/>
            <person name="Hide W."/>
            <person name="Bult C."/>
            <person name="Grimmond S.M."/>
            <person name="Teasdale R.D."/>
            <person name="Liu E.T."/>
            <person name="Brusic V."/>
            <person name="Quackenbush J."/>
            <person name="Wahlestedt C."/>
            <person name="Mattick J.S."/>
            <person name="Hume D.A."/>
            <person name="Kai C."/>
            <person name="Sasaki D."/>
            <person name="Tomaru Y."/>
            <person name="Fukuda S."/>
            <person name="Kanamori-Katayama M."/>
            <person name="Suzuki M."/>
            <person name="Aoki J."/>
            <person name="Arakawa T."/>
            <person name="Iida J."/>
            <person name="Imamura K."/>
            <person name="Itoh M."/>
            <person name="Kato T."/>
            <person name="Kawaji H."/>
            <person name="Kawagashira N."/>
            <person name="Kawashima T."/>
            <person name="Kojima M."/>
            <person name="Kondo S."/>
            <person name="Konno H."/>
            <person name="Nakano K."/>
            <person name="Ninomiya N."/>
            <person name="Nishio T."/>
            <person name="Okada M."/>
            <person name="Plessy C."/>
            <person name="Shibata K."/>
            <person name="Shiraki T."/>
            <person name="Suzuki S."/>
            <person name="Tagami M."/>
            <person name="Waki K."/>
            <person name="Watahiki A."/>
            <person name="Okamura-Oho Y."/>
            <person name="Suzuki H."/>
            <person name="Kawai J."/>
            <person name="Hayashizaki Y."/>
        </authorList>
    </citation>
    <scope>NUCLEOTIDE SEQUENCE [LARGE SCALE MRNA] (ISOFORMS 1; 2 AND 3)</scope>
    <source>
        <strain>C57BL/6J</strain>
        <tissue>Brain</tissue>
        <tissue>Cerebellum</tissue>
        <tissue>Liver</tissue>
        <tissue>Medulla oblongata</tissue>
    </source>
</reference>
<reference key="4">
    <citation type="journal article" date="2007" name="J. Cell Biol.">
        <title>Very-KIND, a KIND domain containing RasGEF, controls dendrite growth by linking Ras small GTPases and MAP2.</title>
        <authorList>
            <person name="Huang J."/>
            <person name="Furuya A."/>
            <person name="Furuichi T."/>
        </authorList>
    </citation>
    <scope>FUNCTION</scope>
    <scope>INTERACTION WITH MAP2</scope>
    <scope>SUBCELLULAR LOCATION</scope>
    <scope>DEVELOPMENTAL STAGE</scope>
    <scope>TISSUE SPECIFICITY</scope>
</reference>
<reference key="5">
    <citation type="journal article" date="2010" name="Cell">
        <title>A tissue-specific atlas of mouse protein phosphorylation and expression.</title>
        <authorList>
            <person name="Huttlin E.L."/>
            <person name="Jedrychowski M.P."/>
            <person name="Elias J.E."/>
            <person name="Goswami T."/>
            <person name="Rad R."/>
            <person name="Beausoleil S.A."/>
            <person name="Villen J."/>
            <person name="Haas W."/>
            <person name="Sowa M.E."/>
            <person name="Gygi S.P."/>
        </authorList>
    </citation>
    <scope>PHOSPHORYLATION [LARGE SCALE ANALYSIS] AT SER-267 AND SER-951</scope>
    <scope>IDENTIFICATION BY MASS SPECTROMETRY [LARGE SCALE ANALYSIS]</scope>
    <source>
        <tissue>Brain</tissue>
    </source>
</reference>
<reference key="6">
    <citation type="journal article" date="2011" name="FEBS J.">
        <title>Interaction between very-KIND Ras guanine exchange factor and microtubule-associated protein 2, and its role in dendrite growth -- structure and function of the second kinase noncatalytic C-lobe domain.</title>
        <authorList>
            <person name="Huang J."/>
            <person name="Furuya A."/>
            <person name="Hayashi K."/>
            <person name="Furuichi T."/>
        </authorList>
    </citation>
    <scope>FUNCTION</scope>
    <scope>SUBCELLULAR LOCATION</scope>
    <scope>INTERACTION WITH MAP2</scope>
    <scope>MUTAGENESIS OF LEU-461; LEU-474; LEU-477; LEU-482 AND LEU-485</scope>
</reference>
<comment type="function">
    <text evidence="1 8 9">RAS-Guanine nucleotide exchange factor (GEF) that controls the negative regulation of neuronal dendrite growth by mediating a signaling pathway linking RAS and MAP2 (PubMed:17984326, PubMed:21385318). May be involved in cellular senescence (By similarity).</text>
</comment>
<comment type="subunit">
    <text evidence="8">Interacts (via KIND2) with MAP2; the interaction enhances MAP2 phosphorylation and localizes KNDC1 to dendrites.</text>
</comment>
<comment type="interaction">
    <interactant intactId="EBI-8605532">
        <id>Q0KK55</id>
    </interactant>
    <interactant intactId="EBI-397863">
        <id>P20357</id>
        <label>Map2</label>
    </interactant>
    <organismsDiffer>false</organismsDiffer>
    <experiments>9</experiments>
</comment>
<comment type="subcellular location">
    <subcellularLocation>
        <location evidence="8">Cell projection</location>
        <location evidence="8">Dendrite</location>
    </subcellularLocation>
    <subcellularLocation>
        <location evidence="8">Perikaryon</location>
    </subcellularLocation>
</comment>
<comment type="alternative products">
    <event type="alternative splicing"/>
    <isoform>
        <id>Q0KK55-1</id>
        <name>1</name>
        <sequence type="displayed"/>
    </isoform>
    <isoform>
        <id>Q0KK55-2</id>
        <name>2</name>
        <sequence type="described" ref="VSP_028600 VSP_028601"/>
    </isoform>
    <isoform>
        <id>Q0KK55-3</id>
        <name>3</name>
        <sequence type="described" ref="VSP_028599"/>
    </isoform>
</comment>
<comment type="tissue specificity">
    <text evidence="7 8">Highly expressed in the brain and at low levels in the ovary. In the brain it is most prominently expressed in the cerebellum where it is restricted to the granular Purkinje cell layer.</text>
</comment>
<comment type="developmental stage">
    <text evidence="7 8">At 14.5 dpc, highly expressed in the mid- and hindbrain and only weakly in the forebrain, but during development the main expression shifts towards the telencephalon as seen at 17.5 dpc (PubMed:16099729). In cerebellum expression is highly up-regulated between postnatal days P7 and P12. At P7, low expression levels throughout the brain, but high in hippocampus, thalamus and the cerebellar white matter (PubMed:17984326).</text>
</comment>
<comment type="sequence caution" evidence="13">
    <conflict type="frameshift">
        <sequence resource="EMBL-CDS" id="BAC41157"/>
    </conflict>
</comment>
<proteinExistence type="evidence at protein level"/>
<accession>Q0KK55</accession>
<accession>Q0KK50</accession>
<accession>Q3TF27</accession>
<accession>Q3UGX9</accession>
<accession>Q3UGZ3</accession>
<accession>Q3UHK4</accession>
<accession>Q7TNH0</accession>
<accession>Q8BTH5</accession>
<accession>Q8BXJ3</accession>
<organism>
    <name type="scientific">Mus musculus</name>
    <name type="common">Mouse</name>
    <dbReference type="NCBI Taxonomy" id="10090"/>
    <lineage>
        <taxon>Eukaryota</taxon>
        <taxon>Metazoa</taxon>
        <taxon>Chordata</taxon>
        <taxon>Craniata</taxon>
        <taxon>Vertebrata</taxon>
        <taxon>Euteleostomi</taxon>
        <taxon>Mammalia</taxon>
        <taxon>Eutheria</taxon>
        <taxon>Euarchontoglires</taxon>
        <taxon>Glires</taxon>
        <taxon>Rodentia</taxon>
        <taxon>Myomorpha</taxon>
        <taxon>Muroidea</taxon>
        <taxon>Muridae</taxon>
        <taxon>Murinae</taxon>
        <taxon>Mus</taxon>
        <taxon>Mus</taxon>
    </lineage>
</organism>
<sequence>MQAMDPASRGFYEEDGKDLDFYDFEPLPTLPEDEENVSLADILSLRDRGLSEQEAWAVCLECSLSMRSVAHAAIFQTLCITPDTLAFNTSGNVCFMEQLSDDPEGAFVPPEFDLTGNTFEAHIYSLGATLKAALEYVPEPELEPKLSTDLEGLLSQMQAEDPRERPDLASIIALCEEKMQPVSSCRLCRSLSAIGRRVLSIESFGAFQELSENTWRGRPAPRNVGPKKMPGDLSTDPEALFPSKGLLQPPASRDAEQEAGQRPRAPSPKPLLSAPVRNGENPGQEGLADLVLDARCPLGELDRDNLRRSRLKKAQTFPRLLQESTETSTLCLSLNGSRNQLAISEFFPPDPRKLFLEGKNGLSGFKTQSKSRLWPEQEPGVQLDKTPGAGRNPHRSPGASGQLEASSPSQGSVEYKPSPSPVDAGDSDHEGHIPRSEEKIPEESRQPGSTATEQSLSLKDLLSKLGRPFREYELWALCLSCLSTLQTHKEHPAHLCLDNVLVAEDGTVFFGPPPANGAYNSLFLAPEVSEEKLVTEKASVYCVAAVLWTAAKFSVPRDHKLALPRRLKTLLLDMARRHASERPSAAEAIKVCSSYLLQRGMDSSKILAHLRASTCKVHPEEETIGLQNAFSVVELKSTTAPAPESSPGFLQVSNDTKLVAVPGPVPGLPPCCKEACELPAAFTSEATHFKPIVLAQDASVTRDQLALPSESNEKPKEGSGHLDREGTRKQAALELVEATDLKMSNQLSPGPELQGATPDPDGDSGSPSSATECSCPHGPALVTQQKGTSGTPSSPASSLPPEHRPDGEGPLGTTVLPGPTSASQGSRHPCKPPRGKAAASPSSPRGSDGHPEKPRPADRKLCPSSVDTSSPPKMTACPSLQEAMRLIQEEFAFDGYMDNGLEALIMGEYIYALKDLTFATFCGAISEKFCDLYWDEQLLKNLFKVVNGPASPSESTSEEPGSQPEHSPSRCSLSSKRPSLHGLGKEKPATTWGSGGPCSPTALSDIDSDTLSQGNFEVGFRSQKSIKVTREQQPEAEVGGQPGPSQDSTSHASDTVARLARSEDGGPAGSPGASDFQNCSPGWSSAFYEADCFGADVYNYVKDLERQKTNGHTELEAQSPELEQQLMIEKRNYRKTLKFYQKLLQKEKRNKGSEVRTMLSKLRGQLDEMKSKVQFLSLVKKYLQVMYAERWGLEPCALPVIVNIAAAPCDTLDFSPLDESSSLIFYNVNKHPGSGRQKKARILQAGTPLGLMAYLYSSDAFLEGYVQQFLYTFRYFCTPHDFLHFLLDRISSTLSRAHQDPTSTFTKIYRRSLCVLQAWVEDCYTVDFIRNAGLLGQLEDFISSKILPLDGTAEHLLALLEVGTERRADSASRGADLEDPKEAEEDTRPFNALCKRFSEDGITRKSFSWRLPRGNGLVLPHHKERQYTIASALPKPCFFEDFYGPYAKASEKGPYFLTEYSTNQLFTQLTLLQQELFQKCHPVHFLNSRALGVMDKSAAIPKASSSESLSAKTCSLFLPNYVQDKYLLQLLRNADDVSTWVAAEIVTSHTSKLQVNLLSKFLLIAKSCYEQRNFATAMQILGGLEHLAVRQSPAWRILPAKIAEVMEELKAVEVFLKSDSLCLMEGRRFRAQPTLPSAHLLAMHIQQLETGGFTMTNGAHRWSKLRNIAKVASQVHAFQENPYTFSPDPKLQAHLKQRIARFSGADVSILAADNRANFHQIPGEKHSRKIQDKLRRMKATFQ</sequence>
<protein>
    <recommendedName>
        <fullName evidence="14">Kinase non-catalytic C-lobe domain-containing protein 1</fullName>
        <shortName evidence="13">KIND domain-containing protein 1</shortName>
    </recommendedName>
    <alternativeName>
        <fullName evidence="10">Protein very KIND</fullName>
        <shortName evidence="12">v-KIND</shortName>
    </alternativeName>
    <alternativeName>
        <fullName evidence="13">Ras-GEF domain-containing family member 2</fullName>
    </alternativeName>
</protein>
<dbReference type="EMBL" id="AJ580324">
    <property type="protein sequence ID" value="CAE30489.2"/>
    <property type="molecule type" value="mRNA"/>
</dbReference>
<dbReference type="EMBL" id="AB257857">
    <property type="protein sequence ID" value="BAF03200.1"/>
    <property type="molecule type" value="mRNA"/>
</dbReference>
<dbReference type="EMBL" id="AB257862">
    <property type="protein sequence ID" value="BAF03205.1"/>
    <property type="molecule type" value="Genomic_DNA"/>
</dbReference>
<dbReference type="EMBL" id="AK046817">
    <property type="protein sequence ID" value="BAC32882.1"/>
    <property type="molecule type" value="mRNA"/>
</dbReference>
<dbReference type="EMBL" id="AK090282">
    <property type="protein sequence ID" value="BAC41157.1"/>
    <property type="status" value="ALT_FRAME"/>
    <property type="molecule type" value="mRNA"/>
</dbReference>
<dbReference type="EMBL" id="AK147335">
    <property type="protein sequence ID" value="BAE27853.1"/>
    <property type="molecule type" value="mRNA"/>
</dbReference>
<dbReference type="EMBL" id="AK147672">
    <property type="protein sequence ID" value="BAE28064.1"/>
    <property type="molecule type" value="mRNA"/>
</dbReference>
<dbReference type="EMBL" id="AK147693">
    <property type="protein sequence ID" value="BAE28078.1"/>
    <property type="molecule type" value="mRNA"/>
</dbReference>
<dbReference type="EMBL" id="AK169316">
    <property type="protein sequence ID" value="BAE41071.1"/>
    <property type="molecule type" value="mRNA"/>
</dbReference>
<dbReference type="RefSeq" id="NP_796235.4">
    <molecule id="Q0KK55-1"/>
    <property type="nucleotide sequence ID" value="NM_177261.4"/>
</dbReference>
<dbReference type="SMR" id="Q0KK55"/>
<dbReference type="BioGRID" id="218148">
    <property type="interactions" value="9"/>
</dbReference>
<dbReference type="FunCoup" id="Q0KK55">
    <property type="interactions" value="81"/>
</dbReference>
<dbReference type="IntAct" id="Q0KK55">
    <property type="interactions" value="1"/>
</dbReference>
<dbReference type="MINT" id="Q0KK55"/>
<dbReference type="STRING" id="10090.ENSMUSP00000050586"/>
<dbReference type="GlyGen" id="Q0KK55">
    <property type="glycosylation" value="2 sites"/>
</dbReference>
<dbReference type="iPTMnet" id="Q0KK55"/>
<dbReference type="PhosphoSitePlus" id="Q0KK55"/>
<dbReference type="CPTAC" id="non-CPTAC-4014"/>
<dbReference type="PaxDb" id="10090-ENSMUSP00000050586"/>
<dbReference type="PeptideAtlas" id="Q0KK55"/>
<dbReference type="ProteomicsDB" id="297602">
    <molecule id="Q0KK55-1"/>
</dbReference>
<dbReference type="ProteomicsDB" id="297603">
    <molecule id="Q0KK55-2"/>
</dbReference>
<dbReference type="ProteomicsDB" id="297604">
    <molecule id="Q0KK55-3"/>
</dbReference>
<dbReference type="Antibodypedia" id="48672">
    <property type="antibodies" value="62 antibodies from 11 providers"/>
</dbReference>
<dbReference type="DNASU" id="76484"/>
<dbReference type="Ensembl" id="ENSMUST00000053445.18">
    <molecule id="Q0KK55-1"/>
    <property type="protein sequence ID" value="ENSMUSP00000050586.12"/>
    <property type="gene ID" value="ENSMUSG00000066129.18"/>
</dbReference>
<dbReference type="GeneID" id="76484"/>
<dbReference type="KEGG" id="mmu:76484"/>
<dbReference type="UCSC" id="uc009kgd.1">
    <molecule id="Q0KK55-1"/>
    <property type="organism name" value="mouse"/>
</dbReference>
<dbReference type="AGR" id="MGI:1923734"/>
<dbReference type="CTD" id="85442"/>
<dbReference type="MGI" id="MGI:1923734">
    <property type="gene designation" value="Kndc1"/>
</dbReference>
<dbReference type="VEuPathDB" id="HostDB:ENSMUSG00000066129"/>
<dbReference type="eggNOG" id="ENOG502QSHW">
    <property type="taxonomic scope" value="Eukaryota"/>
</dbReference>
<dbReference type="GeneTree" id="ENSGT00390000011408"/>
<dbReference type="HOGENOM" id="CLU_003380_0_0_1"/>
<dbReference type="InParanoid" id="Q0KK55"/>
<dbReference type="OMA" id="ASTCKVH"/>
<dbReference type="OrthoDB" id="10254377at2759"/>
<dbReference type="PhylomeDB" id="Q0KK55"/>
<dbReference type="TreeFam" id="TF336009"/>
<dbReference type="BioGRID-ORCS" id="76484">
    <property type="hits" value="0 hits in 70 CRISPR screens"/>
</dbReference>
<dbReference type="PRO" id="PR:Q0KK55"/>
<dbReference type="Proteomes" id="UP000000589">
    <property type="component" value="Chromosome 7"/>
</dbReference>
<dbReference type="RNAct" id="Q0KK55">
    <property type="molecule type" value="protein"/>
</dbReference>
<dbReference type="Bgee" id="ENSMUSG00000066129">
    <property type="expression patterns" value="Expressed in lateral geniculate body and 112 other cell types or tissues"/>
</dbReference>
<dbReference type="ExpressionAtlas" id="Q0KK55">
    <property type="expression patterns" value="baseline and differential"/>
</dbReference>
<dbReference type="GO" id="GO:0030425">
    <property type="term" value="C:dendrite"/>
    <property type="evidence" value="ECO:0000314"/>
    <property type="project" value="MGI"/>
</dbReference>
<dbReference type="GO" id="GO:0032045">
    <property type="term" value="C:guanyl-nucleotide exchange factor complex"/>
    <property type="evidence" value="ECO:0000314"/>
    <property type="project" value="MGI"/>
</dbReference>
<dbReference type="GO" id="GO:0043025">
    <property type="term" value="C:neuronal cell body"/>
    <property type="evidence" value="ECO:0000314"/>
    <property type="project" value="MGI"/>
</dbReference>
<dbReference type="GO" id="GO:0043204">
    <property type="term" value="C:perikaryon"/>
    <property type="evidence" value="ECO:0007669"/>
    <property type="project" value="UniProtKB-SubCell"/>
</dbReference>
<dbReference type="GO" id="GO:0005085">
    <property type="term" value="F:guanyl-nucleotide exchange factor activity"/>
    <property type="evidence" value="ECO:0000314"/>
    <property type="project" value="MGI"/>
</dbReference>
<dbReference type="GO" id="GO:0021707">
    <property type="term" value="P:cerebellar granule cell differentiation"/>
    <property type="evidence" value="ECO:0000315"/>
    <property type="project" value="MGI"/>
</dbReference>
<dbReference type="GO" id="GO:0050773">
    <property type="term" value="P:regulation of dendrite development"/>
    <property type="evidence" value="ECO:0000314"/>
    <property type="project" value="MGI"/>
</dbReference>
<dbReference type="GO" id="GO:0048814">
    <property type="term" value="P:regulation of dendrite morphogenesis"/>
    <property type="evidence" value="ECO:0000314"/>
    <property type="project" value="MGI"/>
</dbReference>
<dbReference type="GO" id="GO:0007264">
    <property type="term" value="P:small GTPase-mediated signal transduction"/>
    <property type="evidence" value="ECO:0007669"/>
    <property type="project" value="InterPro"/>
</dbReference>
<dbReference type="CDD" id="cd06224">
    <property type="entry name" value="REM"/>
    <property type="match status" value="1"/>
</dbReference>
<dbReference type="FunFam" id="1.10.510.10:FF:000694">
    <property type="entry name" value="Kinase non-catalytic C-lobe domain containing 1"/>
    <property type="match status" value="1"/>
</dbReference>
<dbReference type="FunFam" id="1.10.510.10:FF:000529">
    <property type="entry name" value="Kinase non-catalytic C-lobe domain-containing 1"/>
    <property type="match status" value="1"/>
</dbReference>
<dbReference type="FunFam" id="1.10.840.10:FF:000013">
    <property type="entry name" value="Kinase non-catalytic C-lobe domain-containing 1"/>
    <property type="match status" value="1"/>
</dbReference>
<dbReference type="FunFam" id="1.20.870.10:FF:000014">
    <property type="entry name" value="Kinase non-catalytic C-lobe domain-containing 1"/>
    <property type="match status" value="1"/>
</dbReference>
<dbReference type="Gene3D" id="1.10.840.10">
    <property type="entry name" value="Ras guanine-nucleotide exchange factors catalytic domain"/>
    <property type="match status" value="1"/>
</dbReference>
<dbReference type="Gene3D" id="1.20.870.10">
    <property type="entry name" value="Son of sevenless (SoS) protein Chain: S domain 1"/>
    <property type="match status" value="1"/>
</dbReference>
<dbReference type="Gene3D" id="1.10.510.10">
    <property type="entry name" value="Transferase(Phosphotransferase) domain 1"/>
    <property type="match status" value="2"/>
</dbReference>
<dbReference type="InterPro" id="IPR011009">
    <property type="entry name" value="Kinase-like_dom_sf"/>
</dbReference>
<dbReference type="InterPro" id="IPR011019">
    <property type="entry name" value="KIND_dom"/>
</dbReference>
<dbReference type="InterPro" id="IPR029899">
    <property type="entry name" value="KNDC1"/>
</dbReference>
<dbReference type="InterPro" id="IPR000651">
    <property type="entry name" value="Ras-like_Gua-exchang_fac_N"/>
</dbReference>
<dbReference type="InterPro" id="IPR023578">
    <property type="entry name" value="Ras_GEF_dom_sf"/>
</dbReference>
<dbReference type="InterPro" id="IPR001895">
    <property type="entry name" value="RASGEF_cat_dom"/>
</dbReference>
<dbReference type="InterPro" id="IPR036964">
    <property type="entry name" value="RASGEF_cat_dom_sf"/>
</dbReference>
<dbReference type="PANTHER" id="PTHR21560:SF0">
    <property type="entry name" value="KINASE NON-CATALYTIC C-LOBE DOMAIN-CONTAINING PROTEIN 1"/>
    <property type="match status" value="1"/>
</dbReference>
<dbReference type="PANTHER" id="PTHR21560">
    <property type="entry name" value="VERY KIND PROTEIN"/>
    <property type="match status" value="1"/>
</dbReference>
<dbReference type="Pfam" id="PF16474">
    <property type="entry name" value="KIND"/>
    <property type="match status" value="1"/>
</dbReference>
<dbReference type="Pfam" id="PF00617">
    <property type="entry name" value="RasGEF"/>
    <property type="match status" value="1"/>
</dbReference>
<dbReference type="Pfam" id="PF00618">
    <property type="entry name" value="RasGEF_N"/>
    <property type="match status" value="1"/>
</dbReference>
<dbReference type="SMART" id="SM00750">
    <property type="entry name" value="KIND"/>
    <property type="match status" value="2"/>
</dbReference>
<dbReference type="SMART" id="SM00147">
    <property type="entry name" value="RasGEF"/>
    <property type="match status" value="1"/>
</dbReference>
<dbReference type="SUPFAM" id="SSF56112">
    <property type="entry name" value="Protein kinase-like (PK-like)"/>
    <property type="match status" value="1"/>
</dbReference>
<dbReference type="SUPFAM" id="SSF48366">
    <property type="entry name" value="Ras GEF"/>
    <property type="match status" value="1"/>
</dbReference>
<dbReference type="PROSITE" id="PS51377">
    <property type="entry name" value="KIND"/>
    <property type="match status" value="2"/>
</dbReference>
<dbReference type="PROSITE" id="PS50009">
    <property type="entry name" value="RASGEF_CAT"/>
    <property type="match status" value="1"/>
</dbReference>
<dbReference type="PROSITE" id="PS50212">
    <property type="entry name" value="RASGEF_NTER"/>
    <property type="match status" value="1"/>
</dbReference>
<feature type="chain" id="PRO_0000307142" description="Kinase non-catalytic C-lobe domain-containing protein 1">
    <location>
        <begin position="1"/>
        <end position="1742"/>
    </location>
</feature>
<feature type="domain" description="KIND 1" evidence="5">
    <location>
        <begin position="37"/>
        <end position="217"/>
    </location>
</feature>
<feature type="domain" description="KIND 2" evidence="5">
    <location>
        <begin position="456"/>
        <end position="620"/>
    </location>
</feature>
<feature type="domain" description="N-terminal Ras-GEF" evidence="3">
    <location>
        <begin position="1239"/>
        <end position="1367"/>
    </location>
</feature>
<feature type="domain" description="Ras-GEF" evidence="4">
    <location>
        <begin position="1461"/>
        <end position="1712"/>
    </location>
</feature>
<feature type="region of interest" description="Disordered" evidence="6">
    <location>
        <begin position="215"/>
        <end position="288"/>
    </location>
</feature>
<feature type="region of interest" description="Disordered" evidence="6">
    <location>
        <begin position="365"/>
        <end position="455"/>
    </location>
</feature>
<feature type="region of interest" description="Disordered" evidence="6">
    <location>
        <begin position="703"/>
        <end position="727"/>
    </location>
</feature>
<feature type="region of interest" description="Disordered" evidence="6">
    <location>
        <begin position="744"/>
        <end position="876"/>
    </location>
</feature>
<feature type="region of interest" description="Disordered" evidence="6">
    <location>
        <begin position="948"/>
        <end position="1006"/>
    </location>
</feature>
<feature type="region of interest" description="Disordered" evidence="6">
    <location>
        <begin position="1028"/>
        <end position="1076"/>
    </location>
</feature>
<feature type="coiled-coil region" evidence="2">
    <location>
        <begin position="1112"/>
        <end position="1177"/>
    </location>
</feature>
<feature type="compositionally biased region" description="Polar residues" evidence="6">
    <location>
        <begin position="403"/>
        <end position="412"/>
    </location>
</feature>
<feature type="compositionally biased region" description="Basic and acidic residues" evidence="6">
    <location>
        <begin position="426"/>
        <end position="445"/>
    </location>
</feature>
<feature type="compositionally biased region" description="Basic and acidic residues" evidence="6">
    <location>
        <begin position="711"/>
        <end position="727"/>
    </location>
</feature>
<feature type="compositionally biased region" description="Low complexity" evidence="6">
    <location>
        <begin position="755"/>
        <end position="771"/>
    </location>
</feature>
<feature type="compositionally biased region" description="Polar residues" evidence="6">
    <location>
        <begin position="782"/>
        <end position="791"/>
    </location>
</feature>
<feature type="compositionally biased region" description="Basic and acidic residues" evidence="6">
    <location>
        <begin position="847"/>
        <end position="861"/>
    </location>
</feature>
<feature type="compositionally biased region" description="Low complexity" evidence="6">
    <location>
        <begin position="949"/>
        <end position="965"/>
    </location>
</feature>
<feature type="compositionally biased region" description="Polar residues" evidence="6">
    <location>
        <begin position="1043"/>
        <end position="1053"/>
    </location>
</feature>
<feature type="modified residue" description="Phosphoserine" evidence="15">
    <location>
        <position position="267"/>
    </location>
</feature>
<feature type="modified residue" description="Phosphoserine" evidence="15">
    <location>
        <position position="951"/>
    </location>
</feature>
<feature type="splice variant" id="VSP_028599" description="In isoform 3." evidence="11">
    <location>
        <begin position="1"/>
        <end position="1126"/>
    </location>
</feature>
<feature type="splice variant" id="VSP_028600" description="In isoform 2." evidence="11">
    <original>ASVYCVAAVLWTAAKFSVPRDHKLALPRRLKTLLL</original>
    <variation>VTSHITSLAPSSPSAQWIAGPDGLNVAPILLAGLL</variation>
    <location>
        <begin position="538"/>
        <end position="572"/>
    </location>
</feature>
<feature type="splice variant" id="VSP_028601" description="In isoform 2." evidence="11">
    <location>
        <begin position="573"/>
        <end position="1742"/>
    </location>
</feature>
<feature type="mutagenesis site" description="Abolishes interaction with MAP2." evidence="9">
    <original>L</original>
    <variation>A</variation>
    <location>
        <position position="461"/>
    </location>
</feature>
<feature type="mutagenesis site" description="Abolishes interaction with MAP2." evidence="9">
    <original>L</original>
    <variation>A</variation>
    <location>
        <position position="474"/>
    </location>
</feature>
<feature type="mutagenesis site" description="Abolishes interaction with MAP2." evidence="9">
    <original>L</original>
    <variation>A</variation>
    <location>
        <position position="477"/>
    </location>
</feature>
<feature type="mutagenesis site" description="No effect on interaction with MAP2." evidence="9">
    <original>L</original>
    <variation>A</variation>
    <location>
        <position position="482"/>
    </location>
</feature>
<feature type="mutagenesis site" description="No effect on interaction with MAP2." evidence="9">
    <original>L</original>
    <variation>A</variation>
    <location>
        <position position="485"/>
    </location>
</feature>
<feature type="sequence conflict" description="In Ref. 1; CAE30489." evidence="13" ref="1">
    <original>D</original>
    <variation>G</variation>
    <location>
        <position position="20"/>
    </location>
</feature>
<feature type="sequence conflict" description="In Ref. 3; BAC41157." evidence="13" ref="3">
    <original>L</original>
    <variation>V</variation>
    <location>
        <position position="154"/>
    </location>
</feature>
<feature type="sequence conflict" description="In Ref. 2; BAF03200." evidence="13" ref="2">
    <original>R</original>
    <variation>E</variation>
    <location>
        <position position="253"/>
    </location>
</feature>
<feature type="sequence conflict" description="In Ref. 2; BAF03200." evidence="13" ref="2">
    <original>D</original>
    <variation>G</variation>
    <location>
        <position position="289"/>
    </location>
</feature>
<feature type="sequence conflict" description="In Ref. 2; BAF03205." evidence="13" ref="2">
    <original>R</original>
    <variation>Q</variation>
    <location>
        <position position="310"/>
    </location>
</feature>
<feature type="sequence conflict" description="In Ref. 2; BAF03200." evidence="13" ref="2">
    <original>S</original>
    <variation>L</variation>
    <location>
        <position position="427"/>
    </location>
</feature>
<feature type="sequence conflict" description="In Ref. 3; BAE27853." evidence="13" ref="3">
    <original>G</original>
    <variation>C</variation>
    <location>
        <position position="431"/>
    </location>
</feature>
<feature type="sequence conflict" description="In Ref. 3; BAE28078." evidence="13" ref="3">
    <original>I</original>
    <variation>T</variation>
    <location>
        <position position="440"/>
    </location>
</feature>
<feature type="sequence conflict" description="In Ref. 2; BAF03200." evidence="13" ref="2">
    <original>A</original>
    <variation>V</variation>
    <location>
        <position position="780"/>
    </location>
</feature>
<feature type="sequence conflict" description="In Ref. 2; BAF03200." evidence="13" ref="2">
    <original>G</original>
    <variation>D</variation>
    <location>
        <position position="812"/>
    </location>
</feature>
<feature type="sequence conflict" description="In Ref. 1; CAE30489." evidence="13" ref="1">
    <original>K</original>
    <variation>R</variation>
    <location>
        <position position="836"/>
    </location>
</feature>
<feature type="sequence conflict" description="In Ref. 3; BAE28064." evidence="13" ref="3">
    <original>R</original>
    <variation>G</variation>
    <location>
        <position position="845"/>
    </location>
</feature>
<feature type="sequence conflict" description="In Ref. 1; CAE30489." evidence="13" ref="1">
    <original>S</original>
    <variation>N</variation>
    <location>
        <position position="957"/>
    </location>
</feature>
<feature type="sequence conflict" description="In Ref. 1; CAE30489 and 2; BAF03200." evidence="13" ref="1 2">
    <original>T</original>
    <variation>A</variation>
    <location>
        <position position="1109"/>
    </location>
</feature>
<feature type="sequence conflict" description="In Ref. 1; CAE30489." evidence="13" ref="1">
    <original>C</original>
    <variation>F</variation>
    <location>
        <position position="1209"/>
    </location>
</feature>
<feature type="sequence conflict" description="In Ref. 1; CAE30489." evidence="13" ref="1">
    <original>T</original>
    <variation>A</variation>
    <location>
        <position position="1306"/>
    </location>
</feature>